<organism>
    <name type="scientific">Arabidopsis thaliana</name>
    <name type="common">Mouse-ear cress</name>
    <dbReference type="NCBI Taxonomy" id="3702"/>
    <lineage>
        <taxon>Eukaryota</taxon>
        <taxon>Viridiplantae</taxon>
        <taxon>Streptophyta</taxon>
        <taxon>Embryophyta</taxon>
        <taxon>Tracheophyta</taxon>
        <taxon>Spermatophyta</taxon>
        <taxon>Magnoliopsida</taxon>
        <taxon>eudicotyledons</taxon>
        <taxon>Gunneridae</taxon>
        <taxon>Pentapetalae</taxon>
        <taxon>rosids</taxon>
        <taxon>malvids</taxon>
        <taxon>Brassicales</taxon>
        <taxon>Brassicaceae</taxon>
        <taxon>Camelineae</taxon>
        <taxon>Arabidopsis</taxon>
    </lineage>
</organism>
<dbReference type="EMBL" id="AC000104">
    <property type="protein sequence ID" value="AAB70453.1"/>
    <property type="status" value="ALT_SEQ"/>
    <property type="molecule type" value="Genomic_DNA"/>
</dbReference>
<dbReference type="EMBL" id="CP002684">
    <property type="protein sequence ID" value="AEE27691.2"/>
    <property type="molecule type" value="Genomic_DNA"/>
</dbReference>
<dbReference type="EMBL" id="AK228712">
    <property type="protein sequence ID" value="BAF00614.1"/>
    <property type="molecule type" value="mRNA"/>
</dbReference>
<dbReference type="PIR" id="G86175">
    <property type="entry name" value="G86175"/>
</dbReference>
<dbReference type="RefSeq" id="NP_001318918.1">
    <molecule id="P93820-1"/>
    <property type="nucleotide sequence ID" value="NM_001331477.1"/>
</dbReference>
<dbReference type="BioGRID" id="24765">
    <property type="interactions" value="1"/>
</dbReference>
<dbReference type="FunCoup" id="P93820">
    <property type="interactions" value="1694"/>
</dbReference>
<dbReference type="STRING" id="3702.P93820"/>
<dbReference type="iPTMnet" id="P93820"/>
<dbReference type="ProteomicsDB" id="243031">
    <molecule id="P93820-1"/>
</dbReference>
<dbReference type="EnsemblPlants" id="AT1G04390.1">
    <molecule id="P93820-1"/>
    <property type="protein sequence ID" value="AT1G04390.1"/>
    <property type="gene ID" value="AT1G04390"/>
</dbReference>
<dbReference type="GeneID" id="839530"/>
<dbReference type="Gramene" id="AT1G04390.1">
    <molecule id="P93820-1"/>
    <property type="protein sequence ID" value="AT1G04390.1"/>
    <property type="gene ID" value="AT1G04390"/>
</dbReference>
<dbReference type="KEGG" id="ath:AT1G04390"/>
<dbReference type="Araport" id="AT1G04390"/>
<dbReference type="TAIR" id="AT1G04390"/>
<dbReference type="eggNOG" id="ENOG502QR8C">
    <property type="taxonomic scope" value="Eukaryota"/>
</dbReference>
<dbReference type="InParanoid" id="P93820"/>
<dbReference type="OMA" id="CLNILFT"/>
<dbReference type="UniPathway" id="UPA00143"/>
<dbReference type="PRO" id="PR:P93820"/>
<dbReference type="Proteomes" id="UP000006548">
    <property type="component" value="Chromosome 1"/>
</dbReference>
<dbReference type="ExpressionAtlas" id="P93820">
    <property type="expression patterns" value="baseline and differential"/>
</dbReference>
<dbReference type="GO" id="GO:0016567">
    <property type="term" value="P:protein ubiquitination"/>
    <property type="evidence" value="ECO:0007669"/>
    <property type="project" value="UniProtKB-UniPathway"/>
</dbReference>
<dbReference type="CDD" id="cd18186">
    <property type="entry name" value="BTB_POZ_ZBTB_KLHL-like"/>
    <property type="match status" value="1"/>
</dbReference>
<dbReference type="Gene3D" id="3.30.710.10">
    <property type="entry name" value="Potassium Channel Kv1.1, Chain A"/>
    <property type="match status" value="2"/>
</dbReference>
<dbReference type="InterPro" id="IPR016024">
    <property type="entry name" value="ARM-type_fold"/>
</dbReference>
<dbReference type="InterPro" id="IPR044953">
    <property type="entry name" value="At1g04390-like"/>
</dbReference>
<dbReference type="InterPro" id="IPR000210">
    <property type="entry name" value="BTB/POZ_dom"/>
</dbReference>
<dbReference type="InterPro" id="IPR011333">
    <property type="entry name" value="SKP1/BTB/POZ_sf"/>
</dbReference>
<dbReference type="PANTHER" id="PTHR35918:SF1">
    <property type="entry name" value="BTB DOMAIN-CONTAINING PROTEIN"/>
    <property type="match status" value="1"/>
</dbReference>
<dbReference type="PANTHER" id="PTHR35918">
    <property type="entry name" value="OS06G0674800 PROTEIN"/>
    <property type="match status" value="1"/>
</dbReference>
<dbReference type="Pfam" id="PF00651">
    <property type="entry name" value="BTB"/>
    <property type="match status" value="1"/>
</dbReference>
<dbReference type="SUPFAM" id="SSF48371">
    <property type="entry name" value="ARM repeat"/>
    <property type="match status" value="1"/>
</dbReference>
<dbReference type="SUPFAM" id="SSF54695">
    <property type="entry name" value="POZ domain"/>
    <property type="match status" value="1"/>
</dbReference>
<dbReference type="PROSITE" id="PS50097">
    <property type="entry name" value="BTB"/>
    <property type="match status" value="1"/>
</dbReference>
<accession>P93820</accession>
<accession>F4I487</accession>
<accession>Q0WQI5</accession>
<protein>
    <recommendedName>
        <fullName>BTB/POZ domain-containing protein At1g04390</fullName>
    </recommendedName>
</protein>
<gene>
    <name type="ordered locus">At1g04390</name>
    <name type="ORF">F19P19.16</name>
</gene>
<sequence length="1002" mass="112373">MASSKGGNTTAHINTLHHRLYHALNLGFRVCDEKEKKWKCTDIEIQRHVVKSISAFLDCFSRATANNRLIKDSISDIAGALVFILGSKNRAVVGLAANVVIRLIRIVPPSILHSYSLDLVESLSPLLCCQQFDVSLPCAVALNAILVNVRETKEKEVWKILEDEKTVVSVVGNLQIFSEGSMSVEWFQEMALLLSTIMLKWPQSRYSVWNNPALMGVLESVSQKPDMGLTVATLKLYSSLALCGHGANELLDNGKPMLDMMISCMEESSSQNARIEGLKLAQRLATGNRECLKMINMCSESLVKATVRTMGKWFLSSGKLELDQMSLLVEACKLALITRWEGQHHIYFWKYRISEALLSLVVENFHSQSLDGYVSLEEEVLVAEKVLNANFLPSLRSYVWDIIGFLAAHCEEEFDSILRGDELCLNFLVTCACLSFSRSVQKGYQICQNDIISASHSESASRAVLMMICSPSKYISSRARVTLSFILEEGGEQNLNSLVNFLSYIPSSGGYILPNILQTTVCLVGFACYSSIPQYASFILRKQGLEILLSFCSWYQRNWENIGASSFAPSSQSITEKRICCWVCTEDWDNKDAFLLYALLALAELVNHSFFGQNHAEELSMKSGNLKDRLCTTLKEIRDGTYGSGPRWYAAHILSYFGYYGFEHKLGKRLMCAYEDEEYSDMRLLFASGNSASVNKVIIAVRCPMLLPPKEGAHSSSTISTEKSQRTVQEIRMSANVDILALVKLLEFAYSGYVEVESTTLKKLKPLAKHCKAKVLLQMLCRRRPKWGSSIPEIDIPLALTPKLIHFSDVILVPKETNVACFNCRMCSLTSPHAHSHRVILSSGCEYLRALFRSGMQESHLDRLNVPVSWLGLTKLVSWFYSDELPKPPSGCKWNNMDTEAKLDELQAYVEIYSLSEWWIMEELQNDCAHVILSCLESARELSIKTIELAASFSMWKLVEAAANHAAPIYHQLRDSGELDELDDELVNLIRTAAVQFSQQGG</sequence>
<feature type="chain" id="PRO_0000408532" description="BTB/POZ domain-containing protein At1g04390">
    <location>
        <begin position="1"/>
        <end position="1002"/>
    </location>
</feature>
<feature type="domain" description="BTB 1" evidence="2">
    <location>
        <begin position="680"/>
        <end position="758"/>
    </location>
</feature>
<feature type="domain" description="BTB 2" evidence="2">
    <location>
        <begin position="808"/>
        <end position="889"/>
    </location>
</feature>
<feature type="splice variant" id="VSP_041110" description="In isoform 2." evidence="4">
    <location>
        <begin position="1"/>
        <end position="465"/>
    </location>
</feature>
<evidence type="ECO:0000250" key="1"/>
<evidence type="ECO:0000255" key="2">
    <source>
        <dbReference type="PROSITE-ProRule" id="PRU00037"/>
    </source>
</evidence>
<evidence type="ECO:0000269" key="3">
    <source>
    </source>
</evidence>
<evidence type="ECO:0000303" key="4">
    <source ref="3"/>
</evidence>
<evidence type="ECO:0000305" key="5"/>
<reference key="1">
    <citation type="journal article" date="2000" name="Nature">
        <title>Sequence and analysis of chromosome 1 of the plant Arabidopsis thaliana.</title>
        <authorList>
            <person name="Theologis A."/>
            <person name="Ecker J.R."/>
            <person name="Palm C.J."/>
            <person name="Federspiel N.A."/>
            <person name="Kaul S."/>
            <person name="White O."/>
            <person name="Alonso J."/>
            <person name="Altafi H."/>
            <person name="Araujo R."/>
            <person name="Bowman C.L."/>
            <person name="Brooks S.Y."/>
            <person name="Buehler E."/>
            <person name="Chan A."/>
            <person name="Chao Q."/>
            <person name="Chen H."/>
            <person name="Cheuk R.F."/>
            <person name="Chin C.W."/>
            <person name="Chung M.K."/>
            <person name="Conn L."/>
            <person name="Conway A.B."/>
            <person name="Conway A.R."/>
            <person name="Creasy T.H."/>
            <person name="Dewar K."/>
            <person name="Dunn P."/>
            <person name="Etgu P."/>
            <person name="Feldblyum T.V."/>
            <person name="Feng J.-D."/>
            <person name="Fong B."/>
            <person name="Fujii C.Y."/>
            <person name="Gill J.E."/>
            <person name="Goldsmith A.D."/>
            <person name="Haas B."/>
            <person name="Hansen N.F."/>
            <person name="Hughes B."/>
            <person name="Huizar L."/>
            <person name="Hunter J.L."/>
            <person name="Jenkins J."/>
            <person name="Johnson-Hopson C."/>
            <person name="Khan S."/>
            <person name="Khaykin E."/>
            <person name="Kim C.J."/>
            <person name="Koo H.L."/>
            <person name="Kremenetskaia I."/>
            <person name="Kurtz D.B."/>
            <person name="Kwan A."/>
            <person name="Lam B."/>
            <person name="Langin-Hooper S."/>
            <person name="Lee A."/>
            <person name="Lee J.M."/>
            <person name="Lenz C.A."/>
            <person name="Li J.H."/>
            <person name="Li Y.-P."/>
            <person name="Lin X."/>
            <person name="Liu S.X."/>
            <person name="Liu Z.A."/>
            <person name="Luros J.S."/>
            <person name="Maiti R."/>
            <person name="Marziali A."/>
            <person name="Militscher J."/>
            <person name="Miranda M."/>
            <person name="Nguyen M."/>
            <person name="Nierman W.C."/>
            <person name="Osborne B.I."/>
            <person name="Pai G."/>
            <person name="Peterson J."/>
            <person name="Pham P.K."/>
            <person name="Rizzo M."/>
            <person name="Rooney T."/>
            <person name="Rowley D."/>
            <person name="Sakano H."/>
            <person name="Salzberg S.L."/>
            <person name="Schwartz J.R."/>
            <person name="Shinn P."/>
            <person name="Southwick A.M."/>
            <person name="Sun H."/>
            <person name="Tallon L.J."/>
            <person name="Tambunga G."/>
            <person name="Toriumi M.J."/>
            <person name="Town C.D."/>
            <person name="Utterback T."/>
            <person name="Van Aken S."/>
            <person name="Vaysberg M."/>
            <person name="Vysotskaia V.S."/>
            <person name="Walker M."/>
            <person name="Wu D."/>
            <person name="Yu G."/>
            <person name="Fraser C.M."/>
            <person name="Venter J.C."/>
            <person name="Davis R.W."/>
        </authorList>
    </citation>
    <scope>NUCLEOTIDE SEQUENCE [LARGE SCALE GENOMIC DNA]</scope>
    <source>
        <strain>cv. Columbia</strain>
    </source>
</reference>
<reference key="2">
    <citation type="journal article" date="2017" name="Plant J.">
        <title>Araport11: a complete reannotation of the Arabidopsis thaliana reference genome.</title>
        <authorList>
            <person name="Cheng C.Y."/>
            <person name="Krishnakumar V."/>
            <person name="Chan A.P."/>
            <person name="Thibaud-Nissen F."/>
            <person name="Schobel S."/>
            <person name="Town C.D."/>
        </authorList>
    </citation>
    <scope>GENOME REANNOTATION</scope>
    <source>
        <strain>cv. Columbia</strain>
    </source>
</reference>
<reference key="3">
    <citation type="submission" date="2006-07" db="EMBL/GenBank/DDBJ databases">
        <title>Large-scale analysis of RIKEN Arabidopsis full-length (RAFL) cDNAs.</title>
        <authorList>
            <person name="Totoki Y."/>
            <person name="Seki M."/>
            <person name="Ishida J."/>
            <person name="Nakajima M."/>
            <person name="Enju A."/>
            <person name="Kamiya A."/>
            <person name="Narusaka M."/>
            <person name="Shin-i T."/>
            <person name="Nakagawa M."/>
            <person name="Sakamoto N."/>
            <person name="Oishi K."/>
            <person name="Kohara Y."/>
            <person name="Kobayashi M."/>
            <person name="Toyoda A."/>
            <person name="Sakaki Y."/>
            <person name="Sakurai T."/>
            <person name="Iida K."/>
            <person name="Akiyama K."/>
            <person name="Satou M."/>
            <person name="Toyoda T."/>
            <person name="Konagaya A."/>
            <person name="Carninci P."/>
            <person name="Kawai J."/>
            <person name="Hayashizaki Y."/>
            <person name="Shinozaki K."/>
        </authorList>
    </citation>
    <scope>NUCLEOTIDE SEQUENCE [LARGE SCALE MRNA] (ISOFORM 2)</scope>
    <source>
        <strain>cv. Columbia</strain>
    </source>
</reference>
<reference key="4">
    <citation type="journal article" date="2005" name="J. Biol. Chem.">
        <title>Cullins 3a and 3b assemble with members of the broad complex/tramtrack/bric-a-brac (BTB) protein family to form essential ubiquitin-protein ligases (E3s) in Arabidopsis.</title>
        <authorList>
            <person name="Gingerich D.J."/>
            <person name="Gagne J.M."/>
            <person name="Salter D.W."/>
            <person name="Hellmann H."/>
            <person name="Estelle M."/>
            <person name="Ma L."/>
            <person name="Vierstra R.D."/>
        </authorList>
    </citation>
    <scope>DOMAIN BTB</scope>
</reference>
<name>Y1439_ARATH</name>
<proteinExistence type="evidence at transcript level"/>
<keyword id="KW-0025">Alternative splicing</keyword>
<keyword id="KW-1185">Reference proteome</keyword>
<keyword id="KW-0677">Repeat</keyword>
<keyword id="KW-0833">Ubl conjugation pathway</keyword>
<comment type="function">
    <text evidence="1">May act as a substrate-specific adapter of an E3 ubiquitin-protein ligase complex (CUL3-RBX1-BTB) which mediates the ubiquitination and subsequent proteasomal degradation of target proteins.</text>
</comment>
<comment type="pathway">
    <text>Protein modification; protein ubiquitination.</text>
</comment>
<comment type="alternative products">
    <event type="alternative splicing"/>
    <isoform>
        <id>P93820-1</id>
        <name>1</name>
        <sequence type="displayed"/>
    </isoform>
    <isoform>
        <id>P93820-2</id>
        <name>2</name>
        <sequence type="described" ref="VSP_041110"/>
    </isoform>
</comment>
<comment type="domain">
    <text evidence="3">The BTB/POZ domain mediates the interaction with some component of ubiquitin ligase complexes.</text>
</comment>
<comment type="sequence caution" evidence="5">
    <conflict type="erroneous gene model prediction">
        <sequence resource="EMBL-CDS" id="AAB70453"/>
    </conflict>
</comment>